<name>GUF1_ASPFU</name>
<dbReference type="EC" id="3.6.5.-"/>
<dbReference type="EMBL" id="AAHF01000002">
    <property type="protein sequence ID" value="EAL92153.1"/>
    <property type="status" value="ALT_INIT"/>
    <property type="molecule type" value="Genomic_DNA"/>
</dbReference>
<dbReference type="RefSeq" id="XP_754191.1">
    <property type="nucleotide sequence ID" value="XM_749098.1"/>
</dbReference>
<dbReference type="SMR" id="Q4WYV0"/>
<dbReference type="FunCoup" id="Q4WYV0">
    <property type="interactions" value="723"/>
</dbReference>
<dbReference type="STRING" id="330879.Q4WYV0"/>
<dbReference type="GeneID" id="3512009"/>
<dbReference type="KEGG" id="afm:AFUA_3G14350"/>
<dbReference type="eggNOG" id="KOG0462">
    <property type="taxonomic scope" value="Eukaryota"/>
</dbReference>
<dbReference type="HOGENOM" id="CLU_009995_3_1_1"/>
<dbReference type="InParanoid" id="Q4WYV0"/>
<dbReference type="OrthoDB" id="1074at2759"/>
<dbReference type="Proteomes" id="UP000002530">
    <property type="component" value="Chromosome 3"/>
</dbReference>
<dbReference type="GO" id="GO:0005743">
    <property type="term" value="C:mitochondrial inner membrane"/>
    <property type="evidence" value="ECO:0007669"/>
    <property type="project" value="UniProtKB-SubCell"/>
</dbReference>
<dbReference type="GO" id="GO:0005759">
    <property type="term" value="C:mitochondrial matrix"/>
    <property type="evidence" value="ECO:0007669"/>
    <property type="project" value="UniProtKB-UniRule"/>
</dbReference>
<dbReference type="GO" id="GO:0005739">
    <property type="term" value="C:mitochondrion"/>
    <property type="evidence" value="ECO:0000318"/>
    <property type="project" value="GO_Central"/>
</dbReference>
<dbReference type="GO" id="GO:0005525">
    <property type="term" value="F:GTP binding"/>
    <property type="evidence" value="ECO:0007669"/>
    <property type="project" value="UniProtKB-UniRule"/>
</dbReference>
<dbReference type="GO" id="GO:0003924">
    <property type="term" value="F:GTPase activity"/>
    <property type="evidence" value="ECO:0007669"/>
    <property type="project" value="UniProtKB-UniRule"/>
</dbReference>
<dbReference type="GO" id="GO:0097177">
    <property type="term" value="F:mitochondrial ribosome binding"/>
    <property type="evidence" value="ECO:0000318"/>
    <property type="project" value="GO_Central"/>
</dbReference>
<dbReference type="GO" id="GO:0045727">
    <property type="term" value="P:positive regulation of translation"/>
    <property type="evidence" value="ECO:0000318"/>
    <property type="project" value="GO_Central"/>
</dbReference>
<dbReference type="GO" id="GO:0006412">
    <property type="term" value="P:translation"/>
    <property type="evidence" value="ECO:0007669"/>
    <property type="project" value="UniProtKB-KW"/>
</dbReference>
<dbReference type="CDD" id="cd03699">
    <property type="entry name" value="EF4_II"/>
    <property type="match status" value="1"/>
</dbReference>
<dbReference type="CDD" id="cd01890">
    <property type="entry name" value="LepA"/>
    <property type="match status" value="1"/>
</dbReference>
<dbReference type="CDD" id="cd03709">
    <property type="entry name" value="lepA_C"/>
    <property type="match status" value="1"/>
</dbReference>
<dbReference type="FunFam" id="3.40.50.300:FF:000078">
    <property type="entry name" value="Elongation factor 4"/>
    <property type="match status" value="1"/>
</dbReference>
<dbReference type="FunFam" id="2.40.30.10:FF:000015">
    <property type="entry name" value="Translation factor GUF1, mitochondrial"/>
    <property type="match status" value="1"/>
</dbReference>
<dbReference type="FunFam" id="3.30.70.240:FF:000007">
    <property type="entry name" value="Translation factor GUF1, mitochondrial"/>
    <property type="match status" value="1"/>
</dbReference>
<dbReference type="FunFam" id="3.30.70.2570:FF:000001">
    <property type="entry name" value="Translation factor GUF1, mitochondrial"/>
    <property type="match status" value="1"/>
</dbReference>
<dbReference type="FunFam" id="3.30.70.870:FF:000004">
    <property type="entry name" value="Translation factor GUF1, mitochondrial"/>
    <property type="match status" value="1"/>
</dbReference>
<dbReference type="Gene3D" id="3.30.70.240">
    <property type="match status" value="1"/>
</dbReference>
<dbReference type="Gene3D" id="3.30.70.2570">
    <property type="entry name" value="Elongation factor 4, C-terminal domain"/>
    <property type="match status" value="1"/>
</dbReference>
<dbReference type="Gene3D" id="3.30.70.870">
    <property type="entry name" value="Elongation Factor G (Translational Gtpase), domain 3"/>
    <property type="match status" value="1"/>
</dbReference>
<dbReference type="Gene3D" id="3.40.50.300">
    <property type="entry name" value="P-loop containing nucleotide triphosphate hydrolases"/>
    <property type="match status" value="1"/>
</dbReference>
<dbReference type="Gene3D" id="2.40.30.10">
    <property type="entry name" value="Translation factors"/>
    <property type="match status" value="1"/>
</dbReference>
<dbReference type="HAMAP" id="MF_00071">
    <property type="entry name" value="LepA"/>
    <property type="match status" value="1"/>
</dbReference>
<dbReference type="InterPro" id="IPR006297">
    <property type="entry name" value="EF-4"/>
</dbReference>
<dbReference type="InterPro" id="IPR035647">
    <property type="entry name" value="EFG_III/V"/>
</dbReference>
<dbReference type="InterPro" id="IPR000640">
    <property type="entry name" value="EFG_V-like"/>
</dbReference>
<dbReference type="InterPro" id="IPR004161">
    <property type="entry name" value="EFTu-like_2"/>
</dbReference>
<dbReference type="InterPro" id="IPR031157">
    <property type="entry name" value="G_TR_CS"/>
</dbReference>
<dbReference type="InterPro" id="IPR038363">
    <property type="entry name" value="LepA_C_sf"/>
</dbReference>
<dbReference type="InterPro" id="IPR013842">
    <property type="entry name" value="LepA_CTD"/>
</dbReference>
<dbReference type="InterPro" id="IPR035654">
    <property type="entry name" value="LepA_IV"/>
</dbReference>
<dbReference type="InterPro" id="IPR027417">
    <property type="entry name" value="P-loop_NTPase"/>
</dbReference>
<dbReference type="InterPro" id="IPR005225">
    <property type="entry name" value="Small_GTP-bd"/>
</dbReference>
<dbReference type="InterPro" id="IPR000795">
    <property type="entry name" value="T_Tr_GTP-bd_dom"/>
</dbReference>
<dbReference type="InterPro" id="IPR009000">
    <property type="entry name" value="Transl_B-barrel_sf"/>
</dbReference>
<dbReference type="NCBIfam" id="TIGR01393">
    <property type="entry name" value="lepA"/>
    <property type="match status" value="1"/>
</dbReference>
<dbReference type="NCBIfam" id="TIGR00231">
    <property type="entry name" value="small_GTP"/>
    <property type="match status" value="1"/>
</dbReference>
<dbReference type="PANTHER" id="PTHR43512:SF7">
    <property type="entry name" value="TRANSLATION FACTOR GUF1, MITOCHONDRIAL"/>
    <property type="match status" value="1"/>
</dbReference>
<dbReference type="PANTHER" id="PTHR43512">
    <property type="entry name" value="TRANSLATION FACTOR GUF1-RELATED"/>
    <property type="match status" value="1"/>
</dbReference>
<dbReference type="Pfam" id="PF00679">
    <property type="entry name" value="EFG_C"/>
    <property type="match status" value="1"/>
</dbReference>
<dbReference type="Pfam" id="PF00009">
    <property type="entry name" value="GTP_EFTU"/>
    <property type="match status" value="1"/>
</dbReference>
<dbReference type="Pfam" id="PF03144">
    <property type="entry name" value="GTP_EFTU_D2"/>
    <property type="match status" value="1"/>
</dbReference>
<dbReference type="Pfam" id="PF06421">
    <property type="entry name" value="LepA_C"/>
    <property type="match status" value="1"/>
</dbReference>
<dbReference type="PRINTS" id="PR00315">
    <property type="entry name" value="ELONGATNFCT"/>
</dbReference>
<dbReference type="SUPFAM" id="SSF54980">
    <property type="entry name" value="EF-G C-terminal domain-like"/>
    <property type="match status" value="2"/>
</dbReference>
<dbReference type="SUPFAM" id="SSF52540">
    <property type="entry name" value="P-loop containing nucleoside triphosphate hydrolases"/>
    <property type="match status" value="1"/>
</dbReference>
<dbReference type="SUPFAM" id="SSF50447">
    <property type="entry name" value="Translation proteins"/>
    <property type="match status" value="1"/>
</dbReference>
<dbReference type="PROSITE" id="PS00301">
    <property type="entry name" value="G_TR_1"/>
    <property type="match status" value="1"/>
</dbReference>
<dbReference type="PROSITE" id="PS51722">
    <property type="entry name" value="G_TR_2"/>
    <property type="match status" value="1"/>
</dbReference>
<keyword id="KW-0342">GTP-binding</keyword>
<keyword id="KW-0378">Hydrolase</keyword>
<keyword id="KW-0472">Membrane</keyword>
<keyword id="KW-0496">Mitochondrion</keyword>
<keyword id="KW-0999">Mitochondrion inner membrane</keyword>
<keyword id="KW-0547">Nucleotide-binding</keyword>
<keyword id="KW-0648">Protein biosynthesis</keyword>
<keyword id="KW-1185">Reference proteome</keyword>
<keyword id="KW-0809">Transit peptide</keyword>
<reference key="1">
    <citation type="journal article" date="2005" name="Nature">
        <title>Genomic sequence of the pathogenic and allergenic filamentous fungus Aspergillus fumigatus.</title>
        <authorList>
            <person name="Nierman W.C."/>
            <person name="Pain A."/>
            <person name="Anderson M.J."/>
            <person name="Wortman J.R."/>
            <person name="Kim H.S."/>
            <person name="Arroyo J."/>
            <person name="Berriman M."/>
            <person name="Abe K."/>
            <person name="Archer D.B."/>
            <person name="Bermejo C."/>
            <person name="Bennett J.W."/>
            <person name="Bowyer P."/>
            <person name="Chen D."/>
            <person name="Collins M."/>
            <person name="Coulsen R."/>
            <person name="Davies R."/>
            <person name="Dyer P.S."/>
            <person name="Farman M.L."/>
            <person name="Fedorova N."/>
            <person name="Fedorova N.D."/>
            <person name="Feldblyum T.V."/>
            <person name="Fischer R."/>
            <person name="Fosker N."/>
            <person name="Fraser A."/>
            <person name="Garcia J.L."/>
            <person name="Garcia M.J."/>
            <person name="Goble A."/>
            <person name="Goldman G.H."/>
            <person name="Gomi K."/>
            <person name="Griffith-Jones S."/>
            <person name="Gwilliam R."/>
            <person name="Haas B.J."/>
            <person name="Haas H."/>
            <person name="Harris D.E."/>
            <person name="Horiuchi H."/>
            <person name="Huang J."/>
            <person name="Humphray S."/>
            <person name="Jimenez J."/>
            <person name="Keller N."/>
            <person name="Khouri H."/>
            <person name="Kitamoto K."/>
            <person name="Kobayashi T."/>
            <person name="Konzack S."/>
            <person name="Kulkarni R."/>
            <person name="Kumagai T."/>
            <person name="Lafton A."/>
            <person name="Latge J.-P."/>
            <person name="Li W."/>
            <person name="Lord A."/>
            <person name="Lu C."/>
            <person name="Majoros W.H."/>
            <person name="May G.S."/>
            <person name="Miller B.L."/>
            <person name="Mohamoud Y."/>
            <person name="Molina M."/>
            <person name="Monod M."/>
            <person name="Mouyna I."/>
            <person name="Mulligan S."/>
            <person name="Murphy L.D."/>
            <person name="O'Neil S."/>
            <person name="Paulsen I."/>
            <person name="Penalva M.A."/>
            <person name="Pertea M."/>
            <person name="Price C."/>
            <person name="Pritchard B.L."/>
            <person name="Quail M.A."/>
            <person name="Rabbinowitsch E."/>
            <person name="Rawlins N."/>
            <person name="Rajandream M.A."/>
            <person name="Reichard U."/>
            <person name="Renauld H."/>
            <person name="Robson G.D."/>
            <person name="Rodriguez de Cordoba S."/>
            <person name="Rodriguez-Pena J.M."/>
            <person name="Ronning C.M."/>
            <person name="Rutter S."/>
            <person name="Salzberg S.L."/>
            <person name="Sanchez M."/>
            <person name="Sanchez-Ferrero J.C."/>
            <person name="Saunders D."/>
            <person name="Seeger K."/>
            <person name="Squares R."/>
            <person name="Squares S."/>
            <person name="Takeuchi M."/>
            <person name="Tekaia F."/>
            <person name="Turner G."/>
            <person name="Vazquez de Aldana C.R."/>
            <person name="Weidman J."/>
            <person name="White O."/>
            <person name="Woodward J.R."/>
            <person name="Yu J.-H."/>
            <person name="Fraser C.M."/>
            <person name="Galagan J.E."/>
            <person name="Asai K."/>
            <person name="Machida M."/>
            <person name="Hall N."/>
            <person name="Barrell B.G."/>
            <person name="Denning D.W."/>
        </authorList>
    </citation>
    <scope>NUCLEOTIDE SEQUENCE [LARGE SCALE GENOMIC DNA]</scope>
    <source>
        <strain>ATCC MYA-4609 / CBS 101355 / FGSC A1100 / Af293</strain>
    </source>
</reference>
<gene>
    <name type="primary">guf1</name>
    <name type="ORF">AFUA_3G14350</name>
</gene>
<accession>Q4WYV0</accession>
<comment type="function">
    <text evidence="1">Promotes mitochondrial protein synthesis. May act as a fidelity factor of the translation reaction, by catalyzing a one-codon backward translocation of tRNAs on improperly translocated ribosomes. Binds to mitochondrial ribosomes in a GTP-dependent manner.</text>
</comment>
<comment type="catalytic activity">
    <reaction evidence="1">
        <text>GTP + H2O = GDP + phosphate + H(+)</text>
        <dbReference type="Rhea" id="RHEA:19669"/>
        <dbReference type="ChEBI" id="CHEBI:15377"/>
        <dbReference type="ChEBI" id="CHEBI:15378"/>
        <dbReference type="ChEBI" id="CHEBI:37565"/>
        <dbReference type="ChEBI" id="CHEBI:43474"/>
        <dbReference type="ChEBI" id="CHEBI:58189"/>
    </reaction>
</comment>
<comment type="subcellular location">
    <subcellularLocation>
        <location evidence="1">Mitochondrion inner membrane</location>
        <topology evidence="1">Peripheral membrane protein</topology>
        <orientation evidence="1">Matrix side</orientation>
    </subcellularLocation>
</comment>
<comment type="similarity">
    <text evidence="2">Belongs to the TRAFAC class translation factor GTPase superfamily. Classic translation factor GTPase family. LepA subfamily.</text>
</comment>
<comment type="sequence caution" evidence="2">
    <conflict type="erroneous initiation">
        <sequence resource="EMBL-CDS" id="EAL92153"/>
    </conflict>
    <text>Extended N-terminus.</text>
</comment>
<feature type="transit peptide" description="Mitochondrion" evidence="1">
    <location>
        <begin position="1"/>
        <end position="43"/>
    </location>
</feature>
<feature type="chain" id="PRO_0000402873" description="Translation factor guf1, mitochondrial">
    <location>
        <begin position="44"/>
        <end position="683"/>
    </location>
</feature>
<feature type="domain" description="tr-type G">
    <location>
        <begin position="66"/>
        <end position="250"/>
    </location>
</feature>
<feature type="binding site" evidence="1">
    <location>
        <begin position="75"/>
        <end position="82"/>
    </location>
    <ligand>
        <name>GTP</name>
        <dbReference type="ChEBI" id="CHEBI:37565"/>
    </ligand>
</feature>
<feature type="binding site" evidence="1">
    <location>
        <begin position="139"/>
        <end position="143"/>
    </location>
    <ligand>
        <name>GTP</name>
        <dbReference type="ChEBI" id="CHEBI:37565"/>
    </ligand>
</feature>
<feature type="binding site" evidence="1">
    <location>
        <begin position="193"/>
        <end position="196"/>
    </location>
    <ligand>
        <name>GTP</name>
        <dbReference type="ChEBI" id="CHEBI:37565"/>
    </ligand>
</feature>
<proteinExistence type="inferred from homology"/>
<organism>
    <name type="scientific">Aspergillus fumigatus (strain ATCC MYA-4609 / CBS 101355 / FGSC A1100 / Af293)</name>
    <name type="common">Neosartorya fumigata</name>
    <dbReference type="NCBI Taxonomy" id="330879"/>
    <lineage>
        <taxon>Eukaryota</taxon>
        <taxon>Fungi</taxon>
        <taxon>Dikarya</taxon>
        <taxon>Ascomycota</taxon>
        <taxon>Pezizomycotina</taxon>
        <taxon>Eurotiomycetes</taxon>
        <taxon>Eurotiomycetidae</taxon>
        <taxon>Eurotiales</taxon>
        <taxon>Aspergillaceae</taxon>
        <taxon>Aspergillus</taxon>
        <taxon>Aspergillus subgen. Fumigati</taxon>
    </lineage>
</organism>
<sequence length="683" mass="76047">MRGCLQLARWLSAAPKGTAASLTRAPFVLANAPRYFTSSASRAGSRSTATKPLSDLEKRISAIPIERYRNFCIVAHVDHGKSTLSDRLLELTGTIEPGSNKQVLDKLDVERERGITVKAQTCSMIYNHNGEDYLLHLVDTPGHVDFRAEVSRSYASCGGALLLVDASQGIQAQTVANFYLAFAQGLELIPVINKVDLPSAEPERALEQMKNSFELDTENAVMVSAKTGLNVEKLLPTVIEKIPAYGHFPVDSHELLPLLTLSSPIGDCKKPLRMLLVDSWYDSYKGVICLVRIFDGEIRAGQQVVSFATGLKYYVGEVGIMYPNETPQSVLRAGQVGYIYFNPGMKRSKEAKIGDTFTRVGFEKAVEPLPGFEEPKAMVFVAAYPVDADHFEHLEDSINQLVLNDRSITVQKESSEALGAGFRLGFLGTLHCSVFEDRLRQEHGASIIITPPSVPVKIIWKDGKEEIITSPAKFPEDEELRSKVAEIQEPYVLATLTFPEEYLGKVIELCEANRGEQKSLEYFTPTQVILKYELPLAQLVDDFFGKLKGSTKGYASLDYEESAWQTGNIVKLQLLVNKAPVDAVARIVHSSQVERLGRQWVTKFKEHVDRQLFEVVIQAAVGKKIIARETVKPYRKDVLAKLHASDVSRRRKLLEKQKEGRKRLRAVGNVVIEHKAFQAFLAK</sequence>
<protein>
    <recommendedName>
        <fullName evidence="1">Translation factor guf1, mitochondrial</fullName>
        <ecNumber>3.6.5.-</ecNumber>
    </recommendedName>
    <alternativeName>
        <fullName evidence="1">Elongation factor 4 homolog</fullName>
        <shortName evidence="1">EF-4</shortName>
    </alternativeName>
    <alternativeName>
        <fullName evidence="1">GTPase guf1</fullName>
    </alternativeName>
    <alternativeName>
        <fullName evidence="1">Ribosomal back-translocase</fullName>
    </alternativeName>
</protein>
<evidence type="ECO:0000255" key="1">
    <source>
        <dbReference type="HAMAP-Rule" id="MF_03137"/>
    </source>
</evidence>
<evidence type="ECO:0000305" key="2"/>